<accession>A1ST34</accession>
<protein>
    <recommendedName>
        <fullName evidence="1">Peptide chain release factor 3</fullName>
        <shortName evidence="1">RF-3</shortName>
    </recommendedName>
</protein>
<gene>
    <name evidence="1" type="primary">prfC</name>
    <name type="ordered locus">Ping_0806</name>
</gene>
<dbReference type="EMBL" id="CP000510">
    <property type="protein sequence ID" value="ABM02649.1"/>
    <property type="molecule type" value="Genomic_DNA"/>
</dbReference>
<dbReference type="RefSeq" id="WP_011769212.1">
    <property type="nucleotide sequence ID" value="NC_008709.1"/>
</dbReference>
<dbReference type="SMR" id="A1ST34"/>
<dbReference type="STRING" id="357804.Ping_0806"/>
<dbReference type="KEGG" id="pin:Ping_0806"/>
<dbReference type="eggNOG" id="COG4108">
    <property type="taxonomic scope" value="Bacteria"/>
</dbReference>
<dbReference type="HOGENOM" id="CLU_002794_2_1_6"/>
<dbReference type="OrthoDB" id="9804431at2"/>
<dbReference type="Proteomes" id="UP000000639">
    <property type="component" value="Chromosome"/>
</dbReference>
<dbReference type="GO" id="GO:0005829">
    <property type="term" value="C:cytosol"/>
    <property type="evidence" value="ECO:0007669"/>
    <property type="project" value="TreeGrafter"/>
</dbReference>
<dbReference type="GO" id="GO:0005525">
    <property type="term" value="F:GTP binding"/>
    <property type="evidence" value="ECO:0007669"/>
    <property type="project" value="UniProtKB-UniRule"/>
</dbReference>
<dbReference type="GO" id="GO:0003924">
    <property type="term" value="F:GTPase activity"/>
    <property type="evidence" value="ECO:0007669"/>
    <property type="project" value="InterPro"/>
</dbReference>
<dbReference type="GO" id="GO:0097216">
    <property type="term" value="F:guanosine tetraphosphate binding"/>
    <property type="evidence" value="ECO:0007669"/>
    <property type="project" value="UniProtKB-ARBA"/>
</dbReference>
<dbReference type="GO" id="GO:0016150">
    <property type="term" value="F:translation release factor activity, codon nonspecific"/>
    <property type="evidence" value="ECO:0007669"/>
    <property type="project" value="TreeGrafter"/>
</dbReference>
<dbReference type="GO" id="GO:0016149">
    <property type="term" value="F:translation release factor activity, codon specific"/>
    <property type="evidence" value="ECO:0007669"/>
    <property type="project" value="UniProtKB-UniRule"/>
</dbReference>
<dbReference type="GO" id="GO:0006449">
    <property type="term" value="P:regulation of translational termination"/>
    <property type="evidence" value="ECO:0007669"/>
    <property type="project" value="UniProtKB-UniRule"/>
</dbReference>
<dbReference type="CDD" id="cd04169">
    <property type="entry name" value="RF3"/>
    <property type="match status" value="1"/>
</dbReference>
<dbReference type="CDD" id="cd03689">
    <property type="entry name" value="RF3_II"/>
    <property type="match status" value="1"/>
</dbReference>
<dbReference type="CDD" id="cd16259">
    <property type="entry name" value="RF3_III"/>
    <property type="match status" value="1"/>
</dbReference>
<dbReference type="FunFam" id="2.40.30.10:FF:000040">
    <property type="entry name" value="Peptide chain release factor 3"/>
    <property type="match status" value="1"/>
</dbReference>
<dbReference type="FunFam" id="3.30.70.3280:FF:000001">
    <property type="entry name" value="Peptide chain release factor 3"/>
    <property type="match status" value="1"/>
</dbReference>
<dbReference type="FunFam" id="3.40.50.300:FF:000542">
    <property type="entry name" value="Peptide chain release factor 3"/>
    <property type="match status" value="1"/>
</dbReference>
<dbReference type="Gene3D" id="3.40.50.300">
    <property type="entry name" value="P-loop containing nucleotide triphosphate hydrolases"/>
    <property type="match status" value="2"/>
</dbReference>
<dbReference type="Gene3D" id="3.30.70.3280">
    <property type="entry name" value="Peptide chain release factor 3, domain III"/>
    <property type="match status" value="1"/>
</dbReference>
<dbReference type="HAMAP" id="MF_00072">
    <property type="entry name" value="Rel_fac_3"/>
    <property type="match status" value="1"/>
</dbReference>
<dbReference type="InterPro" id="IPR053905">
    <property type="entry name" value="EF-G-like_DII"/>
</dbReference>
<dbReference type="InterPro" id="IPR035647">
    <property type="entry name" value="EFG_III/V"/>
</dbReference>
<dbReference type="InterPro" id="IPR031157">
    <property type="entry name" value="G_TR_CS"/>
</dbReference>
<dbReference type="InterPro" id="IPR027417">
    <property type="entry name" value="P-loop_NTPase"/>
</dbReference>
<dbReference type="InterPro" id="IPR004548">
    <property type="entry name" value="PrfC"/>
</dbReference>
<dbReference type="InterPro" id="IPR032090">
    <property type="entry name" value="RF3_C"/>
</dbReference>
<dbReference type="InterPro" id="IPR038467">
    <property type="entry name" value="RF3_dom_3_sf"/>
</dbReference>
<dbReference type="InterPro" id="IPR041732">
    <property type="entry name" value="RF3_GTP-bd"/>
</dbReference>
<dbReference type="InterPro" id="IPR005225">
    <property type="entry name" value="Small_GTP-bd"/>
</dbReference>
<dbReference type="InterPro" id="IPR000795">
    <property type="entry name" value="T_Tr_GTP-bd_dom"/>
</dbReference>
<dbReference type="InterPro" id="IPR009000">
    <property type="entry name" value="Transl_B-barrel_sf"/>
</dbReference>
<dbReference type="NCBIfam" id="TIGR00503">
    <property type="entry name" value="prfC"/>
    <property type="match status" value="1"/>
</dbReference>
<dbReference type="NCBIfam" id="NF001964">
    <property type="entry name" value="PRK00741.1"/>
    <property type="match status" value="1"/>
</dbReference>
<dbReference type="NCBIfam" id="TIGR00231">
    <property type="entry name" value="small_GTP"/>
    <property type="match status" value="1"/>
</dbReference>
<dbReference type="PANTHER" id="PTHR43556">
    <property type="entry name" value="PEPTIDE CHAIN RELEASE FACTOR RF3"/>
    <property type="match status" value="1"/>
</dbReference>
<dbReference type="PANTHER" id="PTHR43556:SF2">
    <property type="entry name" value="PEPTIDE CHAIN RELEASE FACTOR RF3"/>
    <property type="match status" value="1"/>
</dbReference>
<dbReference type="Pfam" id="PF22042">
    <property type="entry name" value="EF-G_D2"/>
    <property type="match status" value="1"/>
</dbReference>
<dbReference type="Pfam" id="PF00009">
    <property type="entry name" value="GTP_EFTU"/>
    <property type="match status" value="1"/>
</dbReference>
<dbReference type="Pfam" id="PF16658">
    <property type="entry name" value="RF3_C"/>
    <property type="match status" value="1"/>
</dbReference>
<dbReference type="PRINTS" id="PR00315">
    <property type="entry name" value="ELONGATNFCT"/>
</dbReference>
<dbReference type="SUPFAM" id="SSF54980">
    <property type="entry name" value="EF-G C-terminal domain-like"/>
    <property type="match status" value="1"/>
</dbReference>
<dbReference type="SUPFAM" id="SSF52540">
    <property type="entry name" value="P-loop containing nucleoside triphosphate hydrolases"/>
    <property type="match status" value="1"/>
</dbReference>
<dbReference type="SUPFAM" id="SSF50447">
    <property type="entry name" value="Translation proteins"/>
    <property type="match status" value="1"/>
</dbReference>
<dbReference type="PROSITE" id="PS00301">
    <property type="entry name" value="G_TR_1"/>
    <property type="match status" value="1"/>
</dbReference>
<dbReference type="PROSITE" id="PS51722">
    <property type="entry name" value="G_TR_2"/>
    <property type="match status" value="1"/>
</dbReference>
<comment type="function">
    <text evidence="1">Increases the formation of ribosomal termination complexes and stimulates activities of RF-1 and RF-2. It binds guanine nucleotides and has strong preference for UGA stop codons. It may interact directly with the ribosome. The stimulation of RF-1 and RF-2 is significantly reduced by GTP and GDP, but not by GMP.</text>
</comment>
<comment type="subcellular location">
    <subcellularLocation>
        <location evidence="1">Cytoplasm</location>
    </subcellularLocation>
</comment>
<comment type="similarity">
    <text evidence="1">Belongs to the TRAFAC class translation factor GTPase superfamily. Classic translation factor GTPase family. PrfC subfamily.</text>
</comment>
<proteinExistence type="inferred from homology"/>
<organism>
    <name type="scientific">Psychromonas ingrahamii (strain DSM 17664 / CCUG 51855 / 37)</name>
    <dbReference type="NCBI Taxonomy" id="357804"/>
    <lineage>
        <taxon>Bacteria</taxon>
        <taxon>Pseudomonadati</taxon>
        <taxon>Pseudomonadota</taxon>
        <taxon>Gammaproteobacteria</taxon>
        <taxon>Alteromonadales</taxon>
        <taxon>Psychromonadaceae</taxon>
        <taxon>Psychromonas</taxon>
    </lineage>
</organism>
<evidence type="ECO:0000255" key="1">
    <source>
        <dbReference type="HAMAP-Rule" id="MF_00072"/>
    </source>
</evidence>
<keyword id="KW-0963">Cytoplasm</keyword>
<keyword id="KW-0342">GTP-binding</keyword>
<keyword id="KW-0547">Nucleotide-binding</keyword>
<keyword id="KW-0648">Protein biosynthesis</keyword>
<keyword id="KW-1185">Reference proteome</keyword>
<sequence>MTSKDIIENVEKRRTFAIISHPDAGKTTITEKVLLFGNALQKAGTVKGKKSGQHAKSDWMEMEKDRGISITTSVMQFPYKDRLVNLLDTPGHEDFSEDTYRTLTAVDSCLMVIDAAKGVEQRTIKLMEVTRLRDTPIITFMNKCDRETRDPVDLMDEVEAILNIACAPITWPIGMGKEFKGIYDLLRDEVILYSSGQGHTIQEVRIIKGLDNPELESVLPNHIHDLREELELVVGASHQFDHELFLKGQLTPVYFGTALGNFGVDHVLDGLVEWAPKPLSRAAKQRVVEPLEDVFSGFIFKIQANMDPRHRDRIAFMRVCAGKYEKGMKMHHVRTGKMVSISDAVTFMAGDRTATEEAYPGDIIGLHNHGTIQIGDTFTSGETLKFAGIPNFAPEMFRRIRLLDPLKQKQLLKGLMQLSEEGAVQVFRPLRSNDLIVGAVGVLQFEVVVQRLKSEYKVDAIYEAISVATALWVESDNPLKMAEFEKKAYDNLALDGSNNLAYIAPTMVNLNLAMERYPDIRFRKTREH</sequence>
<feature type="chain" id="PRO_1000023672" description="Peptide chain release factor 3">
    <location>
        <begin position="1"/>
        <end position="528"/>
    </location>
</feature>
<feature type="domain" description="tr-type G">
    <location>
        <begin position="11"/>
        <end position="279"/>
    </location>
</feature>
<feature type="binding site" evidence="1">
    <location>
        <begin position="20"/>
        <end position="27"/>
    </location>
    <ligand>
        <name>GTP</name>
        <dbReference type="ChEBI" id="CHEBI:37565"/>
    </ligand>
</feature>
<feature type="binding site" evidence="1">
    <location>
        <begin position="88"/>
        <end position="92"/>
    </location>
    <ligand>
        <name>GTP</name>
        <dbReference type="ChEBI" id="CHEBI:37565"/>
    </ligand>
</feature>
<feature type="binding site" evidence="1">
    <location>
        <begin position="142"/>
        <end position="145"/>
    </location>
    <ligand>
        <name>GTP</name>
        <dbReference type="ChEBI" id="CHEBI:37565"/>
    </ligand>
</feature>
<name>RF3_PSYIN</name>
<reference key="1">
    <citation type="journal article" date="2008" name="BMC Genomics">
        <title>Genomics of an extreme psychrophile, Psychromonas ingrahamii.</title>
        <authorList>
            <person name="Riley M."/>
            <person name="Staley J.T."/>
            <person name="Danchin A."/>
            <person name="Wang T.Z."/>
            <person name="Brettin T.S."/>
            <person name="Hauser L.J."/>
            <person name="Land M.L."/>
            <person name="Thompson L.S."/>
        </authorList>
    </citation>
    <scope>NUCLEOTIDE SEQUENCE [LARGE SCALE GENOMIC DNA]</scope>
    <source>
        <strain>DSM 17664 / CCUG 51855 / 37</strain>
    </source>
</reference>